<feature type="initiator methionine" description="Removed" evidence="2">
    <location>
        <position position="1"/>
    </location>
</feature>
<feature type="chain" id="PRO_0000291545" description="Spliceosome-associated protein CWC15 homolog">
    <location>
        <begin position="2"/>
        <end position="229"/>
    </location>
</feature>
<feature type="region of interest" description="Disordered" evidence="4">
    <location>
        <begin position="1"/>
        <end position="133"/>
    </location>
</feature>
<feature type="coiled-coil region" evidence="3">
    <location>
        <begin position="123"/>
        <end position="165"/>
    </location>
</feature>
<feature type="compositionally biased region" description="Polar residues" evidence="4">
    <location>
        <begin position="24"/>
        <end position="34"/>
    </location>
</feature>
<feature type="compositionally biased region" description="Basic and acidic residues" evidence="4">
    <location>
        <begin position="52"/>
        <end position="84"/>
    </location>
</feature>
<feature type="compositionally biased region" description="Acidic residues" evidence="4">
    <location>
        <begin position="104"/>
        <end position="126"/>
    </location>
</feature>
<feature type="modified residue" description="N-acetylthreonine" evidence="2">
    <location>
        <position position="2"/>
    </location>
</feature>
<feature type="modified residue" description="N6-acetyllysine" evidence="1">
    <location>
        <position position="18"/>
    </location>
</feature>
<feature type="modified residue" description="Phosphothreonine" evidence="2">
    <location>
        <position position="47"/>
    </location>
</feature>
<feature type="modified residue" description="Phosphothreonine" evidence="2">
    <location>
        <position position="110"/>
    </location>
</feature>
<feature type="modified residue" description="Phosphoserine" evidence="2">
    <location>
        <position position="121"/>
    </location>
</feature>
<keyword id="KW-0007">Acetylation</keyword>
<keyword id="KW-0175">Coiled coil</keyword>
<keyword id="KW-0507">mRNA processing</keyword>
<keyword id="KW-0508">mRNA splicing</keyword>
<keyword id="KW-0539">Nucleus</keyword>
<keyword id="KW-0597">Phosphoprotein</keyword>
<keyword id="KW-1185">Reference proteome</keyword>
<keyword id="KW-0747">Spliceosome</keyword>
<accession>Q5RE65</accession>
<reference key="1">
    <citation type="submission" date="2004-11" db="EMBL/GenBank/DDBJ databases">
        <authorList>
            <consortium name="The German cDNA consortium"/>
        </authorList>
    </citation>
    <scope>NUCLEOTIDE SEQUENCE [LARGE SCALE MRNA]</scope>
    <source>
        <tissue>Kidney</tissue>
    </source>
</reference>
<name>CWC15_PONAB</name>
<sequence length="229" mass="26624">MTTAARPTFEPARGGRGKGEGDLSQLSKQYSSRDLPSHTKIKYRQTTQDAPEEVRNRDFRRELEERERAAAREKNRDRPTREHTTSSSVSKKPRLDQIPAANLDADDPLTDEEDEDFEEESDDDDTAALLAELEKIKKERAEEQARKEQEQKAEEERIRMENILSGNPLLNLTGPSQPQANFKVKRRWDDDVVFKNCAKGVDDQKKDKRFVNDTLRSEFHKKFMEKYIK</sequence>
<protein>
    <recommendedName>
        <fullName>Spliceosome-associated protein CWC15 homolog</fullName>
    </recommendedName>
</protein>
<evidence type="ECO:0000250" key="1">
    <source>
        <dbReference type="UniProtKB" id="Q9JHS9"/>
    </source>
</evidence>
<evidence type="ECO:0000250" key="2">
    <source>
        <dbReference type="UniProtKB" id="Q9P013"/>
    </source>
</evidence>
<evidence type="ECO:0000255" key="3"/>
<evidence type="ECO:0000256" key="4">
    <source>
        <dbReference type="SAM" id="MobiDB-lite"/>
    </source>
</evidence>
<evidence type="ECO:0000305" key="5"/>
<proteinExistence type="evidence at transcript level"/>
<dbReference type="EMBL" id="CR857672">
    <property type="protein sequence ID" value="CAH89942.1"/>
    <property type="molecule type" value="mRNA"/>
</dbReference>
<dbReference type="RefSeq" id="NP_001127215.1">
    <property type="nucleotide sequence ID" value="NM_001133743.1"/>
</dbReference>
<dbReference type="RefSeq" id="XP_054379837.1">
    <property type="nucleotide sequence ID" value="XM_054523862.2"/>
</dbReference>
<dbReference type="RefSeq" id="XP_054379838.1">
    <property type="nucleotide sequence ID" value="XM_054523863.1"/>
</dbReference>
<dbReference type="SMR" id="Q5RE65"/>
<dbReference type="FunCoup" id="Q5RE65">
    <property type="interactions" value="3284"/>
</dbReference>
<dbReference type="STRING" id="9601.ENSPPYP00000004330"/>
<dbReference type="Ensembl" id="ENSPPYT00000004504.3">
    <property type="protein sequence ID" value="ENSPPYP00000004330.2"/>
    <property type="gene ID" value="ENSPPYG00000003785.3"/>
</dbReference>
<dbReference type="GeneID" id="100174270"/>
<dbReference type="KEGG" id="pon:100174270"/>
<dbReference type="CTD" id="51503"/>
<dbReference type="eggNOG" id="KOG3228">
    <property type="taxonomic scope" value="Eukaryota"/>
</dbReference>
<dbReference type="GeneTree" id="ENSGT00390000012084"/>
<dbReference type="HOGENOM" id="CLU_068312_0_1_1"/>
<dbReference type="InParanoid" id="Q5RE65"/>
<dbReference type="OMA" id="KYREHGQ"/>
<dbReference type="OrthoDB" id="30179at2759"/>
<dbReference type="TreeFam" id="TF321323"/>
<dbReference type="Proteomes" id="UP000001595">
    <property type="component" value="Chromosome 11"/>
</dbReference>
<dbReference type="GO" id="GO:0005739">
    <property type="term" value="C:mitochondrion"/>
    <property type="evidence" value="ECO:0007669"/>
    <property type="project" value="Ensembl"/>
</dbReference>
<dbReference type="GO" id="GO:0016607">
    <property type="term" value="C:nuclear speck"/>
    <property type="evidence" value="ECO:0007669"/>
    <property type="project" value="Ensembl"/>
</dbReference>
<dbReference type="GO" id="GO:0005634">
    <property type="term" value="C:nucleus"/>
    <property type="evidence" value="ECO:0000250"/>
    <property type="project" value="UniProtKB"/>
</dbReference>
<dbReference type="GO" id="GO:0000974">
    <property type="term" value="C:Prp19 complex"/>
    <property type="evidence" value="ECO:0007669"/>
    <property type="project" value="Ensembl"/>
</dbReference>
<dbReference type="GO" id="GO:0005681">
    <property type="term" value="C:spliceosomal complex"/>
    <property type="evidence" value="ECO:0000250"/>
    <property type="project" value="UniProtKB"/>
</dbReference>
<dbReference type="GO" id="GO:0071007">
    <property type="term" value="C:U2-type catalytic step 2 spliceosome"/>
    <property type="evidence" value="ECO:0000250"/>
    <property type="project" value="UniProtKB"/>
</dbReference>
<dbReference type="GO" id="GO:0003723">
    <property type="term" value="F:RNA binding"/>
    <property type="evidence" value="ECO:0000250"/>
    <property type="project" value="UniProtKB"/>
</dbReference>
<dbReference type="GO" id="GO:0045292">
    <property type="term" value="P:mRNA cis splicing, via spliceosome"/>
    <property type="evidence" value="ECO:0007669"/>
    <property type="project" value="TreeGrafter"/>
</dbReference>
<dbReference type="GO" id="GO:0000398">
    <property type="term" value="P:mRNA splicing, via spliceosome"/>
    <property type="evidence" value="ECO:0000250"/>
    <property type="project" value="UniProtKB"/>
</dbReference>
<dbReference type="InterPro" id="IPR006973">
    <property type="entry name" value="Cwf_Cwc_15"/>
</dbReference>
<dbReference type="PANTHER" id="PTHR12718">
    <property type="entry name" value="CELL CYCLE CONTROL PROTEIN CWF15"/>
    <property type="match status" value="1"/>
</dbReference>
<dbReference type="PANTHER" id="PTHR12718:SF2">
    <property type="entry name" value="SPLICEOSOME-ASSOCIATED PROTEIN CWC15 HOMOLOG"/>
    <property type="match status" value="1"/>
</dbReference>
<dbReference type="Pfam" id="PF04889">
    <property type="entry name" value="Cwf_Cwc_15"/>
    <property type="match status" value="1"/>
</dbReference>
<comment type="function">
    <text evidence="2">Involved in pre-mRNA splicing as component of the spliceosome. Component of the PRP19-CDC5L complex that forms an integral part of the spliceosome and is required for activating pre-mRNA splicing. As a component of the minor spliceosome, involved in the splicing of U12-type introns in pre-mRNAs (By similarity).</text>
</comment>
<comment type="subunit">
    <text evidence="2">Identified in the spliceosome C complex. Component of the PRP19-CDC5L splicing complex composed of a core complex comprising a homotetramer of PRPF19, CDC5L, PLRG1 and BCAS2, and at least three less stably associated proteins CTNNBL1, CWC15 and HSPA8. Interacts directly with CTNNBL1 in the complex. Component of the minor spliceosome, which splices U12-type introns (By similarity).</text>
</comment>
<comment type="subcellular location">
    <subcellularLocation>
        <location evidence="2">Nucleus</location>
    </subcellularLocation>
</comment>
<comment type="similarity">
    <text evidence="5">Belongs to the CWC15 family.</text>
</comment>
<gene>
    <name type="primary">CWC15</name>
</gene>
<organism>
    <name type="scientific">Pongo abelii</name>
    <name type="common">Sumatran orangutan</name>
    <name type="synonym">Pongo pygmaeus abelii</name>
    <dbReference type="NCBI Taxonomy" id="9601"/>
    <lineage>
        <taxon>Eukaryota</taxon>
        <taxon>Metazoa</taxon>
        <taxon>Chordata</taxon>
        <taxon>Craniata</taxon>
        <taxon>Vertebrata</taxon>
        <taxon>Euteleostomi</taxon>
        <taxon>Mammalia</taxon>
        <taxon>Eutheria</taxon>
        <taxon>Euarchontoglires</taxon>
        <taxon>Primates</taxon>
        <taxon>Haplorrhini</taxon>
        <taxon>Catarrhini</taxon>
        <taxon>Hominidae</taxon>
        <taxon>Pongo</taxon>
    </lineage>
</organism>